<sequence>MNHFDTIIIGGGPAGMMATISSSFYGQKTLLLEKNKRLGKKLAGTGGGRCNVTNNGNLDDLMAGIPGNGRFLYSVFSQFDNHDIINFFTENGVKLKVEDHGRVFPVTDKSRTIIEALEKKIAELGGTVITNTEIVSVKKTDELFTVRSSDQAWTCQKLIVTTGGKSYPSTGSTGFGHDIARHFKHTVTDLEAAESPLLTDFPHKALQGISLDDVTLSYGKHIITHDLLFTHFGLSGPAALRLSSFVKGGETIYLDVLPQMSQQDLADFLEEHREKSLKNCLKILLPERIADFFTQPFPEKVKQLNLSEKEALIKQIKELPISVTGKMSLAKSFVTKGGVSLKEINPKTLESKLVPGLHFAGEVLDINAHTGGFNITSALCTGWVAGSLHYD</sequence>
<gene>
    <name evidence="4" type="primary">aao(So)</name>
    <name evidence="10" type="ORF">SOL01_18080</name>
</gene>
<name>AAO_STRCR</name>
<evidence type="ECO:0000269" key="1">
    <source>
    </source>
</evidence>
<evidence type="ECO:0000269" key="2">
    <source>
    </source>
</evidence>
<evidence type="ECO:0000269" key="3">
    <source>
    </source>
</evidence>
<evidence type="ECO:0000303" key="4">
    <source>
    </source>
</evidence>
<evidence type="ECO:0000303" key="5">
    <source>
    </source>
</evidence>
<evidence type="ECO:0000303" key="6">
    <source>
    </source>
</evidence>
<evidence type="ECO:0000305" key="7"/>
<evidence type="ECO:0000305" key="8">
    <source>
    </source>
</evidence>
<evidence type="ECO:0000312" key="9">
    <source>
        <dbReference type="EMBL" id="ACA52024.1"/>
    </source>
</evidence>
<evidence type="ECO:0000312" key="10">
    <source>
        <dbReference type="EMBL" id="GEN97934.1"/>
    </source>
</evidence>
<evidence type="ECO:0007744" key="11">
    <source>
        <dbReference type="PDB" id="4CNJ"/>
    </source>
</evidence>
<evidence type="ECO:0007744" key="12">
    <source>
        <dbReference type="PDB" id="4CNK"/>
    </source>
</evidence>
<comment type="function">
    <text evidence="1 2 3">Flavoprotein that probably catalyzes the condensation of two molecules of aminoacetone to yield 3,6-dimethyl-2,5-dihydropyrazine, which is subsequently oxidized to 2,5-dimethylpyrazine (PubMed:25269103). It could be involved in a microbial defense mechanism related to aminoacetone catabolism through a pathway yielding dimethylpyrazine derivatives instead of methylglyoxal (PubMed:25269103). It has also low aminoacetone oxidase activity, and can produce hydrogen peroxide from aminoacetone (PubMed:22666463, PubMed:25269103). In addition, it shows very low L-amino acid oxidase activity, and can produce hydrogen peroxide from peptone and from seven amino acids, L-aspartate, L-tryptophan, L-lysine, L-isoleucine, L-arginine, L-asparagine and L-glutamine (PubMed:18469105). It cannot use L-malate, oxaloacetate or alpha-aminobutyrate (PubMed:25269103). Plays a role in antioxidant defense (PubMed:22666463).</text>
</comment>
<comment type="cofactor">
    <cofactor evidence="3">
        <name>FAD</name>
        <dbReference type="ChEBI" id="CHEBI:57692"/>
    </cofactor>
</comment>
<comment type="subunit">
    <text evidence="3">Monomer.</text>
</comment>
<comment type="induction">
    <text evidence="1 2">Constitutively expressed (PubMed:18469105). Up-regulated in the presence of peptone (PubMed:18469105). Part of the aao(So)-mutT operon (PubMed:22666463).</text>
</comment>
<comment type="domain">
    <text evidence="3">Composed of three domains: an alpha/beta domain corresponding to the FAD-binding domain, a beta-domain partially modulating accessibility to the coenzyme, and an additional alpha-domain.</text>
</comment>
<comment type="disruption phenotype">
    <text evidence="1 2">Inactivation of the gene causes the elevation of the cytoplasmic levels of the prooxidant aminoacetone, resulting in an elevation of cellular reactive oxygen species (ROS) levels and ROS stress (PubMed:22666463). The deletion mutant no longer produces H(2)O(2) from L-amino acids (PubMed:18469105). The deletion mutant exhibits slightly slower growth than wild-type strain (PubMed:22666463). Double deletion of both aao(So) and mutT is lethal (PubMed:22666463).</text>
</comment>
<comment type="similarity">
    <text evidence="7">Belongs to the BaiN/RdsA family.</text>
</comment>
<dbReference type="EC" id="1.-.-.-" evidence="8"/>
<dbReference type="EMBL" id="EU495328">
    <property type="protein sequence ID" value="ACA52024.1"/>
    <property type="molecule type" value="Genomic_DNA"/>
</dbReference>
<dbReference type="EMBL" id="BJYQ01000115">
    <property type="protein sequence ID" value="GEN97934.1"/>
    <property type="molecule type" value="Genomic_DNA"/>
</dbReference>
<dbReference type="RefSeq" id="WP_015604385.1">
    <property type="nucleotide sequence ID" value="NZ_LS483471.1"/>
</dbReference>
<dbReference type="PDB" id="4CNJ">
    <property type="method" value="X-ray"/>
    <property type="resolution" value="2.70 A"/>
    <property type="chains" value="A/B/C/D=1-391"/>
</dbReference>
<dbReference type="PDB" id="4CNK">
    <property type="method" value="X-ray"/>
    <property type="resolution" value="2.00 A"/>
    <property type="chains" value="A/B=1-391"/>
</dbReference>
<dbReference type="PDBsum" id="4CNJ"/>
<dbReference type="PDBsum" id="4CNK"/>
<dbReference type="SMR" id="B1PUC6"/>
<dbReference type="OrthoDB" id="9773233at2"/>
<dbReference type="EvolutionaryTrace" id="B1PUC6"/>
<dbReference type="Proteomes" id="UP000321868">
    <property type="component" value="Unassembled WGS sequence"/>
</dbReference>
<dbReference type="GO" id="GO:0000166">
    <property type="term" value="F:nucleotide binding"/>
    <property type="evidence" value="ECO:0007669"/>
    <property type="project" value="UniProtKB-KW"/>
</dbReference>
<dbReference type="Gene3D" id="3.50.50.60">
    <property type="entry name" value="FAD/NAD(P)-binding domain"/>
    <property type="match status" value="1"/>
</dbReference>
<dbReference type="Gene3D" id="1.10.8.260">
    <property type="entry name" value="HI0933 insert domain-like"/>
    <property type="match status" value="1"/>
</dbReference>
<dbReference type="Gene3D" id="2.40.30.10">
    <property type="entry name" value="Translation factors"/>
    <property type="match status" value="1"/>
</dbReference>
<dbReference type="InterPro" id="IPR004792">
    <property type="entry name" value="BaiN-like"/>
</dbReference>
<dbReference type="InterPro" id="IPR055178">
    <property type="entry name" value="BaiN-like_dom"/>
</dbReference>
<dbReference type="InterPro" id="IPR023166">
    <property type="entry name" value="BaiN-like_dom_sf"/>
</dbReference>
<dbReference type="InterPro" id="IPR036188">
    <property type="entry name" value="FAD/NAD-bd_sf"/>
</dbReference>
<dbReference type="NCBIfam" id="TIGR00275">
    <property type="entry name" value="aminoacetone oxidase family FAD-binding enzyme"/>
    <property type="match status" value="1"/>
</dbReference>
<dbReference type="PANTHER" id="PTHR42887">
    <property type="entry name" value="OS12G0638800 PROTEIN"/>
    <property type="match status" value="1"/>
</dbReference>
<dbReference type="PANTHER" id="PTHR42887:SF2">
    <property type="entry name" value="OS12G0638800 PROTEIN"/>
    <property type="match status" value="1"/>
</dbReference>
<dbReference type="Pfam" id="PF03486">
    <property type="entry name" value="HI0933_like"/>
    <property type="match status" value="1"/>
</dbReference>
<dbReference type="Pfam" id="PF22780">
    <property type="entry name" value="HI0933_like_1st"/>
    <property type="match status" value="1"/>
</dbReference>
<dbReference type="PRINTS" id="PR00411">
    <property type="entry name" value="PNDRDTASEI"/>
</dbReference>
<dbReference type="SUPFAM" id="SSF51905">
    <property type="entry name" value="FAD/NAD(P)-binding domain"/>
    <property type="match status" value="1"/>
</dbReference>
<dbReference type="SUPFAM" id="SSF160996">
    <property type="entry name" value="HI0933 insert domain-like"/>
    <property type="match status" value="1"/>
</dbReference>
<reference evidence="9" key="1">
    <citation type="journal article" date="2008" name="J. Bacteriol.">
        <title>SO-LAAO, a novel L-amino acid oxidase that enables Streptococcus oligofermentans to outcompete Streptococcus mutans by generating H2O2 from peptone.</title>
        <authorList>
            <person name="Tong H."/>
            <person name="Chen W."/>
            <person name="Shi W."/>
            <person name="Qi F."/>
            <person name="Dong X."/>
        </authorList>
    </citation>
    <scope>NUCLEOTIDE SEQUENCE [GENOMIC DNA]</scope>
    <scope>FUNCTION AS AN AMINO ACID OXIDASE</scope>
    <scope>INDUCTION</scope>
    <scope>DISRUPTION PHENOTYPE</scope>
    <source>
        <strain>NBRC 106105 / AS 1.3089</strain>
    </source>
</reference>
<reference evidence="10" key="2">
    <citation type="submission" date="2019-07" db="EMBL/GenBank/DDBJ databases">
        <title>Whole genome shotgun sequence of Streptococcus oligofermentans NBRC 106105.</title>
        <authorList>
            <person name="Hosoyama A."/>
            <person name="Uohara A."/>
            <person name="Ohji S."/>
            <person name="Ichikawa N."/>
        </authorList>
    </citation>
    <scope>NUCLEOTIDE SEQUENCE [LARGE SCALE GENOMIC DNA]</scope>
    <source>
        <strain>NBRC 106105 / AS 1.3089</strain>
    </source>
</reference>
<reference key="3">
    <citation type="journal article" date="2012" name="PLoS ONE">
        <title>Role of operon aaoSo-mutT in antioxidant defense in Streptococcus oligofermentans.</title>
        <authorList>
            <person name="Zhou P."/>
            <person name="Liu L."/>
            <person name="Tong H."/>
            <person name="Dong X."/>
        </authorList>
    </citation>
    <scope>FUNCTION</scope>
    <scope>OPERON STRUCTURE</scope>
    <scope>DISRUPTION PHENOTYPE</scope>
</reference>
<reference evidence="11 12" key="4">
    <citation type="journal article" date="2014" name="Biochem. J.">
        <title>Aminoacetone oxidase from Streptococcus oligofermentans belongs to a new three-domain family of bacterial flavoproteins.</title>
        <authorList>
            <person name="Molla G."/>
            <person name="Nardini M."/>
            <person name="Motta P."/>
            <person name="D'Arrigo P."/>
            <person name="Panzeri W."/>
            <person name="Pollegioni L."/>
        </authorList>
    </citation>
    <scope>X-RAY CRYSTALLOGRAPHY (2.00 ANGSTROMS) IN COMPLEX WITH FAD</scope>
    <scope>FUNCTION</scope>
    <scope>COFACTOR</scope>
    <scope>SUBUNIT</scope>
    <scope>DOMAIN</scope>
</reference>
<accession>B1PUC6</accession>
<proteinExistence type="evidence at protein level"/>
<protein>
    <recommendedName>
        <fullName evidence="5">Aminoacetone oxidase</fullName>
        <shortName evidence="7">AAO</shortName>
        <ecNumber evidence="8">1.-.-.-</ecNumber>
    </recommendedName>
    <alternativeName>
        <fullName evidence="4">L-amino acid oxidase</fullName>
        <shortName evidence="4">LAAO</shortName>
    </alternativeName>
    <alternativeName>
        <fullName evidence="4">SO-LAAO</fullName>
    </alternativeName>
    <alternativeName>
        <fullName evidence="6">SoAAO</fullName>
    </alternativeName>
</protein>
<keyword id="KW-0002">3D-structure</keyword>
<keyword id="KW-0274">FAD</keyword>
<keyword id="KW-0285">Flavoprotein</keyword>
<keyword id="KW-0547">Nucleotide-binding</keyword>
<keyword id="KW-0560">Oxidoreductase</keyword>
<organism>
    <name type="scientific">Streptococcus cristatus</name>
    <dbReference type="NCBI Taxonomy" id="45634"/>
    <lineage>
        <taxon>Bacteria</taxon>
        <taxon>Bacillati</taxon>
        <taxon>Bacillota</taxon>
        <taxon>Bacilli</taxon>
        <taxon>Lactobacillales</taxon>
        <taxon>Streptococcaceae</taxon>
        <taxon>Streptococcus</taxon>
    </lineage>
</organism>
<feature type="chain" id="PRO_0000462211" description="Aminoacetone oxidase">
    <location>
        <begin position="1"/>
        <end position="391"/>
    </location>
</feature>
<feature type="binding site" evidence="3 11 12">
    <location>
        <position position="14"/>
    </location>
    <ligand>
        <name>FAD</name>
        <dbReference type="ChEBI" id="CHEBI:57692"/>
    </ligand>
</feature>
<feature type="binding site" evidence="3 11 12">
    <location>
        <position position="33"/>
    </location>
    <ligand>
        <name>FAD</name>
        <dbReference type="ChEBI" id="CHEBI:57692"/>
    </ligand>
</feature>
<feature type="binding site" evidence="3 11 12">
    <location>
        <position position="134"/>
    </location>
    <ligand>
        <name>FAD</name>
        <dbReference type="ChEBI" id="CHEBI:57692"/>
    </ligand>
</feature>
<feature type="binding site" evidence="3 11 12">
    <location>
        <position position="362"/>
    </location>
    <ligand>
        <name>FAD</name>
        <dbReference type="ChEBI" id="CHEBI:57692"/>
    </ligand>
</feature>
<feature type="binding site" evidence="3 11 12">
    <location>
        <position position="374"/>
    </location>
    <ligand>
        <name>FAD</name>
        <dbReference type="ChEBI" id="CHEBI:57692"/>
    </ligand>
</feature>
<feature type="binding site" evidence="3 11 12">
    <location>
        <position position="375"/>
    </location>
    <ligand>
        <name>FAD</name>
        <dbReference type="ChEBI" id="CHEBI:57692"/>
    </ligand>
</feature>